<gene>
    <name evidence="1" type="primary">apaG</name>
    <name type="ordered locus">PputW619_4802</name>
</gene>
<sequence>MSDPRYQIDVSVVTRYLKDQSDPESDRFAFAYTITVQNNGSIKAKLMSRHWLITNGDGEVEEVRGAGVIGQQPTIEPGQSHTYSSGAVISTRVGTMQGSYQMFAEDGKRFEADIAPFRLAVPGALH</sequence>
<reference key="1">
    <citation type="submission" date="2008-02" db="EMBL/GenBank/DDBJ databases">
        <title>Complete sequence of Pseudomonas putida W619.</title>
        <authorList>
            <person name="Copeland A."/>
            <person name="Lucas S."/>
            <person name="Lapidus A."/>
            <person name="Barry K."/>
            <person name="Detter J.C."/>
            <person name="Glavina del Rio T."/>
            <person name="Dalin E."/>
            <person name="Tice H."/>
            <person name="Pitluck S."/>
            <person name="Chain P."/>
            <person name="Malfatti S."/>
            <person name="Shin M."/>
            <person name="Vergez L."/>
            <person name="Schmutz J."/>
            <person name="Larimer F."/>
            <person name="Land M."/>
            <person name="Hauser L."/>
            <person name="Kyrpides N."/>
            <person name="Kim E."/>
            <person name="Taghavi S."/>
            <person name="Vangronsveld D."/>
            <person name="van der Lelie D."/>
            <person name="Richardson P."/>
        </authorList>
    </citation>
    <scope>NUCLEOTIDE SEQUENCE [LARGE SCALE GENOMIC DNA]</scope>
    <source>
        <strain>W619</strain>
    </source>
</reference>
<dbReference type="EMBL" id="CP000949">
    <property type="protein sequence ID" value="ACA75278.1"/>
    <property type="molecule type" value="Genomic_DNA"/>
</dbReference>
<dbReference type="SMR" id="B1JE08"/>
<dbReference type="STRING" id="390235.PputW619_4802"/>
<dbReference type="KEGG" id="ppw:PputW619_4802"/>
<dbReference type="eggNOG" id="COG2967">
    <property type="taxonomic scope" value="Bacteria"/>
</dbReference>
<dbReference type="HOGENOM" id="CLU_128074_0_0_6"/>
<dbReference type="OrthoDB" id="9795226at2"/>
<dbReference type="GO" id="GO:0070987">
    <property type="term" value="P:error-free translesion synthesis"/>
    <property type="evidence" value="ECO:0007669"/>
    <property type="project" value="TreeGrafter"/>
</dbReference>
<dbReference type="Gene3D" id="2.60.40.1470">
    <property type="entry name" value="ApaG domain"/>
    <property type="match status" value="1"/>
</dbReference>
<dbReference type="HAMAP" id="MF_00791">
    <property type="entry name" value="ApaG"/>
    <property type="match status" value="1"/>
</dbReference>
<dbReference type="InterPro" id="IPR007474">
    <property type="entry name" value="ApaG_domain"/>
</dbReference>
<dbReference type="InterPro" id="IPR036767">
    <property type="entry name" value="ApaG_sf"/>
</dbReference>
<dbReference type="InterPro" id="IPR023065">
    <property type="entry name" value="Uncharacterised_ApaG"/>
</dbReference>
<dbReference type="NCBIfam" id="NF003967">
    <property type="entry name" value="PRK05461.1"/>
    <property type="match status" value="1"/>
</dbReference>
<dbReference type="PANTHER" id="PTHR14289">
    <property type="entry name" value="F-BOX ONLY PROTEIN 3"/>
    <property type="match status" value="1"/>
</dbReference>
<dbReference type="PANTHER" id="PTHR14289:SF16">
    <property type="entry name" value="POLYMERASE DELTA-INTERACTING PROTEIN 2"/>
    <property type="match status" value="1"/>
</dbReference>
<dbReference type="Pfam" id="PF04379">
    <property type="entry name" value="DUF525"/>
    <property type="match status" value="1"/>
</dbReference>
<dbReference type="SUPFAM" id="SSF110069">
    <property type="entry name" value="ApaG-like"/>
    <property type="match status" value="1"/>
</dbReference>
<dbReference type="PROSITE" id="PS51087">
    <property type="entry name" value="APAG"/>
    <property type="match status" value="1"/>
</dbReference>
<feature type="chain" id="PRO_1000133802" description="Protein ApaG">
    <location>
        <begin position="1"/>
        <end position="126"/>
    </location>
</feature>
<feature type="domain" description="ApaG" evidence="1">
    <location>
        <begin position="2"/>
        <end position="126"/>
    </location>
</feature>
<organism>
    <name type="scientific">Pseudomonas putida (strain W619)</name>
    <dbReference type="NCBI Taxonomy" id="390235"/>
    <lineage>
        <taxon>Bacteria</taxon>
        <taxon>Pseudomonadati</taxon>
        <taxon>Pseudomonadota</taxon>
        <taxon>Gammaproteobacteria</taxon>
        <taxon>Pseudomonadales</taxon>
        <taxon>Pseudomonadaceae</taxon>
        <taxon>Pseudomonas</taxon>
    </lineage>
</organism>
<protein>
    <recommendedName>
        <fullName evidence="1">Protein ApaG</fullName>
    </recommendedName>
</protein>
<name>APAG_PSEPW</name>
<accession>B1JE08</accession>
<evidence type="ECO:0000255" key="1">
    <source>
        <dbReference type="HAMAP-Rule" id="MF_00791"/>
    </source>
</evidence>
<proteinExistence type="inferred from homology"/>